<sequence>MSFFTMCVLAAGIGMALGTLGTGIGQGLAVKSAVEGVSRNPGASGKILTTMMIGLAMIESLAIYALVVCLIILFANPYKDIALELAKTVAK</sequence>
<feature type="chain" id="PRO_1000184383" description="ATP synthase subunit c">
    <location>
        <begin position="1"/>
        <end position="91"/>
    </location>
</feature>
<feature type="transmembrane region" description="Helical" evidence="1">
    <location>
        <begin position="4"/>
        <end position="24"/>
    </location>
</feature>
<feature type="transmembrane region" description="Helical" evidence="1">
    <location>
        <begin position="53"/>
        <end position="73"/>
    </location>
</feature>
<feature type="site" description="Reversibly protonated during proton transport" evidence="1">
    <location>
        <position position="59"/>
    </location>
</feature>
<gene>
    <name evidence="1" type="primary">atpE</name>
    <name type="ordered locus">Geob_0457</name>
</gene>
<organism>
    <name type="scientific">Geotalea daltonii (strain DSM 22248 / JCM 15807 / FRC-32)</name>
    <name type="common">Geobacter daltonii</name>
    <dbReference type="NCBI Taxonomy" id="316067"/>
    <lineage>
        <taxon>Bacteria</taxon>
        <taxon>Pseudomonadati</taxon>
        <taxon>Thermodesulfobacteriota</taxon>
        <taxon>Desulfuromonadia</taxon>
        <taxon>Geobacterales</taxon>
        <taxon>Geobacteraceae</taxon>
        <taxon>Geotalea</taxon>
    </lineage>
</organism>
<evidence type="ECO:0000255" key="1">
    <source>
        <dbReference type="HAMAP-Rule" id="MF_01396"/>
    </source>
</evidence>
<name>ATPL_GEODF</name>
<proteinExistence type="inferred from homology"/>
<keyword id="KW-0066">ATP synthesis</keyword>
<keyword id="KW-0997">Cell inner membrane</keyword>
<keyword id="KW-1003">Cell membrane</keyword>
<keyword id="KW-0138">CF(0)</keyword>
<keyword id="KW-0375">Hydrogen ion transport</keyword>
<keyword id="KW-0406">Ion transport</keyword>
<keyword id="KW-0446">Lipid-binding</keyword>
<keyword id="KW-0472">Membrane</keyword>
<keyword id="KW-1185">Reference proteome</keyword>
<keyword id="KW-0812">Transmembrane</keyword>
<keyword id="KW-1133">Transmembrane helix</keyword>
<keyword id="KW-0813">Transport</keyword>
<dbReference type="EMBL" id="CP001390">
    <property type="protein sequence ID" value="ACM18826.1"/>
    <property type="molecule type" value="Genomic_DNA"/>
</dbReference>
<dbReference type="RefSeq" id="WP_012645555.1">
    <property type="nucleotide sequence ID" value="NC_011979.1"/>
</dbReference>
<dbReference type="SMR" id="B9LZL2"/>
<dbReference type="STRING" id="316067.Geob_0457"/>
<dbReference type="KEGG" id="geo:Geob_0457"/>
<dbReference type="eggNOG" id="COG0636">
    <property type="taxonomic scope" value="Bacteria"/>
</dbReference>
<dbReference type="HOGENOM" id="CLU_148047_2_0_7"/>
<dbReference type="OrthoDB" id="5296711at2"/>
<dbReference type="Proteomes" id="UP000007721">
    <property type="component" value="Chromosome"/>
</dbReference>
<dbReference type="GO" id="GO:0005886">
    <property type="term" value="C:plasma membrane"/>
    <property type="evidence" value="ECO:0007669"/>
    <property type="project" value="UniProtKB-SubCell"/>
</dbReference>
<dbReference type="GO" id="GO:0045259">
    <property type="term" value="C:proton-transporting ATP synthase complex"/>
    <property type="evidence" value="ECO:0007669"/>
    <property type="project" value="UniProtKB-KW"/>
</dbReference>
<dbReference type="GO" id="GO:0033177">
    <property type="term" value="C:proton-transporting two-sector ATPase complex, proton-transporting domain"/>
    <property type="evidence" value="ECO:0007669"/>
    <property type="project" value="InterPro"/>
</dbReference>
<dbReference type="GO" id="GO:0008289">
    <property type="term" value="F:lipid binding"/>
    <property type="evidence" value="ECO:0007669"/>
    <property type="project" value="UniProtKB-KW"/>
</dbReference>
<dbReference type="GO" id="GO:0046933">
    <property type="term" value="F:proton-transporting ATP synthase activity, rotational mechanism"/>
    <property type="evidence" value="ECO:0007669"/>
    <property type="project" value="UniProtKB-UniRule"/>
</dbReference>
<dbReference type="CDD" id="cd18121">
    <property type="entry name" value="ATP-synt_Fo_c"/>
    <property type="match status" value="1"/>
</dbReference>
<dbReference type="Gene3D" id="1.20.120.610">
    <property type="entry name" value="lithium bound rotor ring of v- atpase"/>
    <property type="match status" value="1"/>
</dbReference>
<dbReference type="HAMAP" id="MF_01396">
    <property type="entry name" value="ATP_synth_c_bact"/>
    <property type="match status" value="1"/>
</dbReference>
<dbReference type="InterPro" id="IPR005953">
    <property type="entry name" value="ATP_synth_csu_bac/chlpt"/>
</dbReference>
<dbReference type="InterPro" id="IPR000454">
    <property type="entry name" value="ATP_synth_F0_csu"/>
</dbReference>
<dbReference type="InterPro" id="IPR020537">
    <property type="entry name" value="ATP_synth_F0_csu_DDCD_BS"/>
</dbReference>
<dbReference type="InterPro" id="IPR002379">
    <property type="entry name" value="ATPase_proteolipid_c-like_dom"/>
</dbReference>
<dbReference type="InterPro" id="IPR035921">
    <property type="entry name" value="F/V-ATP_Csub_sf"/>
</dbReference>
<dbReference type="NCBIfam" id="TIGR01260">
    <property type="entry name" value="ATP_synt_c"/>
    <property type="match status" value="1"/>
</dbReference>
<dbReference type="PANTHER" id="PTHR10031">
    <property type="entry name" value="ATP SYNTHASE LIPID-BINDING PROTEIN, MITOCHONDRIAL"/>
    <property type="match status" value="1"/>
</dbReference>
<dbReference type="PANTHER" id="PTHR10031:SF0">
    <property type="entry name" value="ATPASE PROTEIN 9"/>
    <property type="match status" value="1"/>
</dbReference>
<dbReference type="Pfam" id="PF00137">
    <property type="entry name" value="ATP-synt_C"/>
    <property type="match status" value="1"/>
</dbReference>
<dbReference type="PRINTS" id="PR00124">
    <property type="entry name" value="ATPASEC"/>
</dbReference>
<dbReference type="SUPFAM" id="SSF81333">
    <property type="entry name" value="F1F0 ATP synthase subunit C"/>
    <property type="match status" value="1"/>
</dbReference>
<dbReference type="PROSITE" id="PS00605">
    <property type="entry name" value="ATPASE_C"/>
    <property type="match status" value="1"/>
</dbReference>
<accession>B9LZL2</accession>
<reference key="1">
    <citation type="submission" date="2009-01" db="EMBL/GenBank/DDBJ databases">
        <title>Complete sequence of Geobacter sp. FRC-32.</title>
        <authorList>
            <consortium name="US DOE Joint Genome Institute"/>
            <person name="Lucas S."/>
            <person name="Copeland A."/>
            <person name="Lapidus A."/>
            <person name="Glavina del Rio T."/>
            <person name="Dalin E."/>
            <person name="Tice H."/>
            <person name="Bruce D."/>
            <person name="Goodwin L."/>
            <person name="Pitluck S."/>
            <person name="Saunders E."/>
            <person name="Brettin T."/>
            <person name="Detter J.C."/>
            <person name="Han C."/>
            <person name="Larimer F."/>
            <person name="Land M."/>
            <person name="Hauser L."/>
            <person name="Kyrpides N."/>
            <person name="Ovchinnikova G."/>
            <person name="Kostka J."/>
            <person name="Richardson P."/>
        </authorList>
    </citation>
    <scope>NUCLEOTIDE SEQUENCE [LARGE SCALE GENOMIC DNA]</scope>
    <source>
        <strain>DSM 22248 / JCM 15807 / FRC-32</strain>
    </source>
</reference>
<protein>
    <recommendedName>
        <fullName evidence="1">ATP synthase subunit c</fullName>
    </recommendedName>
    <alternativeName>
        <fullName evidence="1">ATP synthase F(0) sector subunit c</fullName>
    </alternativeName>
    <alternativeName>
        <fullName evidence="1">F-type ATPase subunit c</fullName>
        <shortName evidence="1">F-ATPase subunit c</shortName>
    </alternativeName>
    <alternativeName>
        <fullName evidence="1">Lipid-binding protein</fullName>
    </alternativeName>
</protein>
<comment type="function">
    <text evidence="1">F(1)F(0) ATP synthase produces ATP from ADP in the presence of a proton or sodium gradient. F-type ATPases consist of two structural domains, F(1) containing the extramembraneous catalytic core and F(0) containing the membrane proton channel, linked together by a central stalk and a peripheral stalk. During catalysis, ATP synthesis in the catalytic domain of F(1) is coupled via a rotary mechanism of the central stalk subunits to proton translocation.</text>
</comment>
<comment type="function">
    <text evidence="1">Key component of the F(0) channel; it plays a direct role in translocation across the membrane. A homomeric c-ring of between 10-14 subunits forms the central stalk rotor element with the F(1) delta and epsilon subunits.</text>
</comment>
<comment type="subunit">
    <text evidence="1">F-type ATPases have 2 components, F(1) - the catalytic core - and F(0) - the membrane proton channel. F(1) has five subunits: alpha(3), beta(3), gamma(1), delta(1), epsilon(1). F(0) has three main subunits: a(1), b(2) and c(10-14). The alpha and beta chains form an alternating ring which encloses part of the gamma chain. F(1) is attached to F(0) by a central stalk formed by the gamma and epsilon chains, while a peripheral stalk is formed by the delta and b chains.</text>
</comment>
<comment type="subcellular location">
    <subcellularLocation>
        <location evidence="1">Cell inner membrane</location>
        <topology evidence="1">Multi-pass membrane protein</topology>
    </subcellularLocation>
</comment>
<comment type="similarity">
    <text evidence="1">Belongs to the ATPase C chain family.</text>
</comment>